<sequence>MAALGSPLRTWRGLLRELRYLNAATGRPYRDTAAYRYLVKAFRAHRVTSEKLCRAQHELHFQAATYLCLLRSIREHVALHQEFHGKGERSVEESAGLVGLKLPQQPGGKGWEP</sequence>
<comment type="function">
    <text evidence="1">Plays a role in the assembly/stability of the mitochondrial membrane ATP synthase (F(1)F(0) ATP synthase or Complex V).</text>
</comment>
<comment type="subunit">
    <text evidence="1">Interacts with ATPAF2.</text>
</comment>
<comment type="subcellular location">
    <subcellularLocation>
        <location evidence="1">Mitochondrion</location>
    </subcellularLocation>
</comment>
<comment type="similarity">
    <text evidence="3">Belongs to the FMC1 family.</text>
</comment>
<reference key="1">
    <citation type="submission" date="2005-08" db="EMBL/GenBank/DDBJ databases">
        <authorList>
            <consortium name="NIH - Mammalian Gene Collection (MGC) project"/>
        </authorList>
    </citation>
    <scope>NUCLEOTIDE SEQUENCE [LARGE SCALE MRNA]</scope>
    <source>
        <strain>Crossbred X Angus</strain>
        <tissue>Ileum</tissue>
    </source>
</reference>
<feature type="chain" id="PRO_0000328779" description="Protein FMC1 homolog">
    <location>
        <begin position="1"/>
        <end position="113"/>
    </location>
</feature>
<feature type="region of interest" description="Disordered" evidence="2">
    <location>
        <begin position="93"/>
        <end position="113"/>
    </location>
</feature>
<dbReference type="EMBL" id="BC103015">
    <property type="protein sequence ID" value="AAI03016.1"/>
    <property type="molecule type" value="mRNA"/>
</dbReference>
<dbReference type="RefSeq" id="NP_001070465.1">
    <property type="nucleotide sequence ID" value="NM_001076997.1"/>
</dbReference>
<dbReference type="FunCoup" id="Q3SZA2">
    <property type="interactions" value="1112"/>
</dbReference>
<dbReference type="STRING" id="9913.ENSBTAP00000063503"/>
<dbReference type="PaxDb" id="9913-ENSBTAP00000054426"/>
<dbReference type="GeneID" id="767923"/>
<dbReference type="KEGG" id="bta:767923"/>
<dbReference type="CTD" id="154791"/>
<dbReference type="VEuPathDB" id="HostDB:ENSBTAG00000053406"/>
<dbReference type="eggNOG" id="KOG0796">
    <property type="taxonomic scope" value="Eukaryota"/>
</dbReference>
<dbReference type="InParanoid" id="Q3SZA2"/>
<dbReference type="OMA" id="HHASLTY"/>
<dbReference type="OrthoDB" id="551431at2759"/>
<dbReference type="Proteomes" id="UP000009136">
    <property type="component" value="Chromosome 4"/>
</dbReference>
<dbReference type="Bgee" id="ENSBTAG00000053406">
    <property type="expression patterns" value="Expressed in cardiac ventricle and 109 other cell types or tissues"/>
</dbReference>
<dbReference type="GO" id="GO:0005739">
    <property type="term" value="C:mitochondrion"/>
    <property type="evidence" value="ECO:0000250"/>
    <property type="project" value="UniProtKB"/>
</dbReference>
<dbReference type="GO" id="GO:0033615">
    <property type="term" value="P:mitochondrial proton-transporting ATP synthase complex assembly"/>
    <property type="evidence" value="ECO:0000250"/>
    <property type="project" value="UniProtKB"/>
</dbReference>
<dbReference type="CDD" id="cd20271">
    <property type="entry name" value="Complex1_LYR_FMC1"/>
    <property type="match status" value="1"/>
</dbReference>
<dbReference type="InterPro" id="IPR037667">
    <property type="entry name" value="FMC1_homologue"/>
</dbReference>
<dbReference type="PANTHER" id="PTHR31716">
    <property type="entry name" value="PROTEIN FMC1 HOMOLOG"/>
    <property type="match status" value="1"/>
</dbReference>
<dbReference type="PANTHER" id="PTHR31716:SF1">
    <property type="entry name" value="PROTEIN FMC1 HOMOLOG"/>
    <property type="match status" value="1"/>
</dbReference>
<dbReference type="Pfam" id="PF13233">
    <property type="entry name" value="Complex1_LYR_2"/>
    <property type="match status" value="1"/>
</dbReference>
<organism>
    <name type="scientific">Bos taurus</name>
    <name type="common">Bovine</name>
    <dbReference type="NCBI Taxonomy" id="9913"/>
    <lineage>
        <taxon>Eukaryota</taxon>
        <taxon>Metazoa</taxon>
        <taxon>Chordata</taxon>
        <taxon>Craniata</taxon>
        <taxon>Vertebrata</taxon>
        <taxon>Euteleostomi</taxon>
        <taxon>Mammalia</taxon>
        <taxon>Eutheria</taxon>
        <taxon>Laurasiatheria</taxon>
        <taxon>Artiodactyla</taxon>
        <taxon>Ruminantia</taxon>
        <taxon>Pecora</taxon>
        <taxon>Bovidae</taxon>
        <taxon>Bovinae</taxon>
        <taxon>Bos</taxon>
    </lineage>
</organism>
<accession>Q3SZA2</accession>
<name>FMC1_BOVIN</name>
<proteinExistence type="inferred from homology"/>
<evidence type="ECO:0000250" key="1">
    <source>
        <dbReference type="UniProtKB" id="Q96HJ9"/>
    </source>
</evidence>
<evidence type="ECO:0000256" key="2">
    <source>
        <dbReference type="SAM" id="MobiDB-lite"/>
    </source>
</evidence>
<evidence type="ECO:0000305" key="3"/>
<keyword id="KW-0496">Mitochondrion</keyword>
<keyword id="KW-1185">Reference proteome</keyword>
<protein>
    <recommendedName>
        <fullName>Protein FMC1 homolog</fullName>
    </recommendedName>
</protein>
<gene>
    <name type="primary">FMC1</name>
</gene>